<feature type="initiator methionine" description="Removed" evidence="2 6">
    <location>
        <position position="1"/>
    </location>
</feature>
<feature type="chain" id="PRO_0000214002" description="Acyl-CoA-binding protein">
    <location>
        <begin position="2"/>
        <end position="87"/>
    </location>
</feature>
<feature type="domain" description="ACB" evidence="5">
    <location>
        <begin position="2"/>
        <end position="87"/>
    </location>
</feature>
<feature type="binding site" evidence="1">
    <location>
        <position position="14"/>
    </location>
    <ligand>
        <name>an acyl-CoA</name>
        <dbReference type="ChEBI" id="CHEBI:58342"/>
    </ligand>
</feature>
<feature type="binding site" evidence="1">
    <location>
        <begin position="29"/>
        <end position="33"/>
    </location>
    <ligand>
        <name>an acyl-CoA</name>
        <dbReference type="ChEBI" id="CHEBI:58342"/>
    </ligand>
</feature>
<feature type="binding site" evidence="1">
    <location>
        <position position="55"/>
    </location>
    <ligand>
        <name>an acyl-CoA</name>
        <dbReference type="ChEBI" id="CHEBI:58342"/>
    </ligand>
</feature>
<feature type="binding site" evidence="1">
    <location>
        <position position="74"/>
    </location>
    <ligand>
        <name>an acyl-CoA</name>
        <dbReference type="ChEBI" id="CHEBI:58342"/>
    </ligand>
</feature>
<feature type="modified residue" description="N-acetylserine" evidence="2">
    <location>
        <position position="2"/>
    </location>
</feature>
<feature type="modified residue" description="N6-acetyllysine; alternate" evidence="3">
    <location>
        <position position="8"/>
    </location>
</feature>
<feature type="modified residue" description="N6-succinyllysine; alternate" evidence="4">
    <location>
        <position position="8"/>
    </location>
</feature>
<feature type="modified residue" description="N6-succinyllysine" evidence="4">
    <location>
        <position position="17"/>
    </location>
</feature>
<feature type="modified residue" description="N6-acetyllysine" evidence="3">
    <location>
        <position position="19"/>
    </location>
</feature>
<feature type="modified residue" description="Phosphotyrosine" evidence="3">
    <location>
        <position position="29"/>
    </location>
</feature>
<feature type="modified residue" description="N6-(2-hydroxyisobutyryl)lysine; alternate" evidence="3">
    <location>
        <position position="55"/>
    </location>
</feature>
<feature type="modified residue" description="N6-acetyllysine; alternate" evidence="3">
    <location>
        <position position="55"/>
    </location>
</feature>
<feature type="modified residue" description="N6-malonyllysine; alternate" evidence="1">
    <location>
        <position position="55"/>
    </location>
</feature>
<feature type="modified residue" description="N6-succinyllysine; alternate" evidence="4">
    <location>
        <position position="55"/>
    </location>
</feature>
<feature type="modified residue" description="N6-acetyllysine; alternate" evidence="3">
    <location>
        <position position="77"/>
    </location>
</feature>
<feature type="modified residue" description="N6-succinyllysine; alternate" evidence="4">
    <location>
        <position position="77"/>
    </location>
</feature>
<sequence>MSQAEFDKAAEDVKHLKTKPADDEMLYIYSHYKQATVGDINTERPGLLDLRGKAKWDAWNQLKGTSKEDAMKAYVNKVEDLKKKYGI</sequence>
<proteinExistence type="evidence at protein level"/>
<comment type="function">
    <text>Binds medium- and long-chain acyl-CoA esters with very high affinity and may function as an intracellular carrier of acyl-CoA esters.</text>
</comment>
<comment type="subunit">
    <text evidence="1">Monomer.</text>
</comment>
<comment type="subcellular location">
    <subcellularLocation>
        <location evidence="3">Endoplasmic reticulum</location>
    </subcellularLocation>
    <subcellularLocation>
        <location evidence="3">Golgi apparatus</location>
    </subcellularLocation>
    <text evidence="3">Golgi localization is dependent on ligand binding.</text>
</comment>
<comment type="similarity">
    <text evidence="7">Belongs to the ACBP family.</text>
</comment>
<dbReference type="PIR" id="S63592">
    <property type="entry name" value="S63592"/>
</dbReference>
<dbReference type="RefSeq" id="NP_001183976.1">
    <property type="nucleotide sequence ID" value="NM_001197047.1"/>
</dbReference>
<dbReference type="SMR" id="Q9TQX6"/>
<dbReference type="FunCoup" id="Q9TQX6">
    <property type="interactions" value="1394"/>
</dbReference>
<dbReference type="STRING" id="9615.ENSCAFP00000050070"/>
<dbReference type="PaxDb" id="9612-ENSCAFP00000036568"/>
<dbReference type="Ensembl" id="ENSCAFT00030037948.1">
    <property type="protein sequence ID" value="ENSCAFP00030033107.1"/>
    <property type="gene ID" value="ENSCAFG00030020618.1"/>
</dbReference>
<dbReference type="Ensembl" id="ENSCAFT00040014563.1">
    <property type="protein sequence ID" value="ENSCAFP00040012591.1"/>
    <property type="gene ID" value="ENSCAFG00040007752.1"/>
</dbReference>
<dbReference type="Ensembl" id="ENSCAFT00845051008.1">
    <property type="protein sequence ID" value="ENSCAFP00845039987.1"/>
    <property type="gene ID" value="ENSCAFG00845028816.1"/>
</dbReference>
<dbReference type="GeneID" id="476115"/>
<dbReference type="KEGG" id="cfa:476115"/>
<dbReference type="CTD" id="1622"/>
<dbReference type="VEuPathDB" id="HostDB:ENSCAFG00845028816"/>
<dbReference type="eggNOG" id="KOG0817">
    <property type="taxonomic scope" value="Eukaryota"/>
</dbReference>
<dbReference type="GeneTree" id="ENSGT00940000154846"/>
<dbReference type="InParanoid" id="Q9TQX6"/>
<dbReference type="OrthoDB" id="346910at2759"/>
<dbReference type="Reactome" id="R-CFA-77289">
    <property type="pathway name" value="Mitochondrial Fatty Acid Beta-Oxidation"/>
</dbReference>
<dbReference type="Proteomes" id="UP000002254">
    <property type="component" value="Unplaced"/>
</dbReference>
<dbReference type="Proteomes" id="UP000694429">
    <property type="component" value="Chromosome 19"/>
</dbReference>
<dbReference type="Proteomes" id="UP000694542">
    <property type="component" value="Chromosome 19"/>
</dbReference>
<dbReference type="Proteomes" id="UP000805418">
    <property type="component" value="Chromosome 19"/>
</dbReference>
<dbReference type="GO" id="GO:0005783">
    <property type="term" value="C:endoplasmic reticulum"/>
    <property type="evidence" value="ECO:0007669"/>
    <property type="project" value="UniProtKB-SubCell"/>
</dbReference>
<dbReference type="GO" id="GO:0005794">
    <property type="term" value="C:Golgi apparatus"/>
    <property type="evidence" value="ECO:0007669"/>
    <property type="project" value="UniProtKB-SubCell"/>
</dbReference>
<dbReference type="GO" id="GO:0000062">
    <property type="term" value="F:fatty-acyl-CoA binding"/>
    <property type="evidence" value="ECO:0000318"/>
    <property type="project" value="GO_Central"/>
</dbReference>
<dbReference type="GO" id="GO:0006631">
    <property type="term" value="P:fatty acid metabolic process"/>
    <property type="evidence" value="ECO:0000318"/>
    <property type="project" value="GO_Central"/>
</dbReference>
<dbReference type="CDD" id="cd00435">
    <property type="entry name" value="ACBP"/>
    <property type="match status" value="1"/>
</dbReference>
<dbReference type="FunFam" id="1.20.80.10:FF:000010">
    <property type="entry name" value="Acyl-CoA-binding domain-containing protein 5"/>
    <property type="match status" value="1"/>
</dbReference>
<dbReference type="Gene3D" id="1.20.80.10">
    <property type="match status" value="1"/>
</dbReference>
<dbReference type="InterPro" id="IPR022408">
    <property type="entry name" value="Acyl-CoA-binding_prot_CS"/>
</dbReference>
<dbReference type="InterPro" id="IPR000582">
    <property type="entry name" value="Acyl-CoA-binding_protein"/>
</dbReference>
<dbReference type="InterPro" id="IPR035984">
    <property type="entry name" value="Acyl-CoA-binding_sf"/>
</dbReference>
<dbReference type="InterPro" id="IPR014352">
    <property type="entry name" value="FERM/acyl-CoA-bd_prot_sf"/>
</dbReference>
<dbReference type="PANTHER" id="PTHR23310:SF54">
    <property type="entry name" value="ACYL-COA-BINDING PROTEIN"/>
    <property type="match status" value="1"/>
</dbReference>
<dbReference type="PANTHER" id="PTHR23310">
    <property type="entry name" value="ACYL-COA-BINDING PROTEIN, ACBP"/>
    <property type="match status" value="1"/>
</dbReference>
<dbReference type="Pfam" id="PF00887">
    <property type="entry name" value="ACBP"/>
    <property type="match status" value="1"/>
</dbReference>
<dbReference type="PRINTS" id="PR00689">
    <property type="entry name" value="ACOABINDINGP"/>
</dbReference>
<dbReference type="SUPFAM" id="SSF47027">
    <property type="entry name" value="Acyl-CoA binding protein"/>
    <property type="match status" value="1"/>
</dbReference>
<dbReference type="PROSITE" id="PS00880">
    <property type="entry name" value="ACB_1"/>
    <property type="match status" value="1"/>
</dbReference>
<dbReference type="PROSITE" id="PS51228">
    <property type="entry name" value="ACB_2"/>
    <property type="match status" value="1"/>
</dbReference>
<organism>
    <name type="scientific">Canis lupus familiaris</name>
    <name type="common">Dog</name>
    <name type="synonym">Canis familiaris</name>
    <dbReference type="NCBI Taxonomy" id="9615"/>
    <lineage>
        <taxon>Eukaryota</taxon>
        <taxon>Metazoa</taxon>
        <taxon>Chordata</taxon>
        <taxon>Craniata</taxon>
        <taxon>Vertebrata</taxon>
        <taxon>Euteleostomi</taxon>
        <taxon>Mammalia</taxon>
        <taxon>Eutheria</taxon>
        <taxon>Laurasiatheria</taxon>
        <taxon>Carnivora</taxon>
        <taxon>Caniformia</taxon>
        <taxon>Canidae</taxon>
        <taxon>Canis</taxon>
    </lineage>
</organism>
<accession>Q9TQX6</accession>
<evidence type="ECO:0000250" key="1"/>
<evidence type="ECO:0000250" key="2">
    <source>
        <dbReference type="UniProtKB" id="P07107"/>
    </source>
</evidence>
<evidence type="ECO:0000250" key="3">
    <source>
        <dbReference type="UniProtKB" id="P07108"/>
    </source>
</evidence>
<evidence type="ECO:0000250" key="4">
    <source>
        <dbReference type="UniProtKB" id="P31786"/>
    </source>
</evidence>
<evidence type="ECO:0000255" key="5">
    <source>
        <dbReference type="PROSITE-ProRule" id="PRU00573"/>
    </source>
</evidence>
<evidence type="ECO:0000269" key="6">
    <source>
    </source>
</evidence>
<evidence type="ECO:0000305" key="7"/>
<keyword id="KW-0007">Acetylation</keyword>
<keyword id="KW-0903">Direct protein sequencing</keyword>
<keyword id="KW-0256">Endoplasmic reticulum</keyword>
<keyword id="KW-0333">Golgi apparatus</keyword>
<keyword id="KW-0379">Hydroxylation</keyword>
<keyword id="KW-0446">Lipid-binding</keyword>
<keyword id="KW-0597">Phosphoprotein</keyword>
<keyword id="KW-1185">Reference proteome</keyword>
<keyword id="KW-0813">Transport</keyword>
<protein>
    <recommendedName>
        <fullName>Acyl-CoA-binding protein</fullName>
        <shortName>ACBP</shortName>
    </recommendedName>
    <alternativeName>
        <fullName>Diazepam-binding inhibitor</fullName>
        <shortName>DBI</shortName>
    </alternativeName>
    <alternativeName>
        <fullName>Endozepine</fullName>
        <shortName>EP</shortName>
    </alternativeName>
</protein>
<name>ACBP_CANLF</name>
<reference key="1">
    <citation type="journal article" date="1996" name="J. Mol. Biol.">
        <title>Fast and one-step folding of closely and distantly related homologous proteins of a four-helix bundle family.</title>
        <authorList>
            <person name="Kragelund B.B."/>
            <person name="Hoejrup P."/>
            <person name="Jensen M.S."/>
            <person name="Schjerling C.K."/>
            <person name="Juul E."/>
            <person name="Knudsen J."/>
            <person name="Poulsen F.M."/>
        </authorList>
    </citation>
    <scope>PROTEIN SEQUENCE OF 2-87</scope>
</reference>
<gene>
    <name type="primary">DBI</name>
</gene>